<accession>Q7NXB9</accession>
<feature type="signal peptide" evidence="1">
    <location>
        <begin position="1"/>
        <end position="24"/>
    </location>
</feature>
<feature type="chain" id="PRO_0000041792" description="Flagellar P-ring protein 1">
    <location>
        <begin position="25"/>
        <end position="368"/>
    </location>
</feature>
<sequence>MIFKQIRRLIAAALLAALSLPAAAQPLRQLVNVEGIRDNQLIGYGIVVGLDGTGDNSQVKFSGQSVANMLKQFGLKMPEKTDTRVKNVAAVMVSASLPPGYSRGQTIDVTVSSLGDAKSLRGGTLLLTQLKAANGEVYALAQGSVVIGGLSAQGKSGSSVTVNTPTAGRIPNGASIEREIPSDFEQGDSIRLSLRRPSFETATNVVRAINRNYGKIATTRNATTIEVRAPGDPTERVAFVARLEKMNVDVGAEIPRVVFNSRTGTVVISEGVTVRPAAVSHGSLRVVISESSQVSQPGPFSNGTTQVVPDSRVQVEQGQGRMFKWPAGASLRAIIDTVNRTGATPDDVMAILQALDQAGAIDGELVVI</sequence>
<gene>
    <name evidence="1" type="primary">flgI1</name>
    <name type="ordered locus">CV_1708</name>
</gene>
<evidence type="ECO:0000255" key="1">
    <source>
        <dbReference type="HAMAP-Rule" id="MF_00416"/>
    </source>
</evidence>
<name>FLGI1_CHRVO</name>
<comment type="function">
    <text evidence="1">Assembles around the rod to form the L-ring and probably protects the motor/basal body from shearing forces during rotation.</text>
</comment>
<comment type="subunit">
    <text evidence="1">The basal body constitutes a major portion of the flagellar organelle and consists of four rings (L,P,S, and M) mounted on a central rod.</text>
</comment>
<comment type="subcellular location">
    <subcellularLocation>
        <location evidence="1">Periplasm</location>
    </subcellularLocation>
    <subcellularLocation>
        <location evidence="1">Bacterial flagellum basal body</location>
    </subcellularLocation>
</comment>
<comment type="similarity">
    <text evidence="1">Belongs to the FlgI family.</text>
</comment>
<proteinExistence type="inferred from homology"/>
<organism>
    <name type="scientific">Chromobacterium violaceum (strain ATCC 12472 / DSM 30191 / JCM 1249 / CCUG 213 / NBRC 12614 / NCIMB 9131 / NCTC 9757 / MK)</name>
    <dbReference type="NCBI Taxonomy" id="243365"/>
    <lineage>
        <taxon>Bacteria</taxon>
        <taxon>Pseudomonadati</taxon>
        <taxon>Pseudomonadota</taxon>
        <taxon>Betaproteobacteria</taxon>
        <taxon>Neisseriales</taxon>
        <taxon>Chromobacteriaceae</taxon>
        <taxon>Chromobacterium</taxon>
    </lineage>
</organism>
<reference key="1">
    <citation type="journal article" date="2003" name="Proc. Natl. Acad. Sci. U.S.A.">
        <title>The complete genome sequence of Chromobacterium violaceum reveals remarkable and exploitable bacterial adaptability.</title>
        <authorList>
            <person name="Vasconcelos A.T.R."/>
            <person name="de Almeida D.F."/>
            <person name="Hungria M."/>
            <person name="Guimaraes C.T."/>
            <person name="Antonio R.V."/>
            <person name="Almeida F.C."/>
            <person name="de Almeida L.G.P."/>
            <person name="de Almeida R."/>
            <person name="Alves-Gomes J.A."/>
            <person name="Andrade E.M."/>
            <person name="Araripe J."/>
            <person name="de Araujo M.F.F."/>
            <person name="Astolfi-Filho S."/>
            <person name="Azevedo V."/>
            <person name="Baptista A.J."/>
            <person name="Bataus L.A.M."/>
            <person name="Batista J.S."/>
            <person name="Belo A."/>
            <person name="van den Berg C."/>
            <person name="Bogo M."/>
            <person name="Bonatto S."/>
            <person name="Bordignon J."/>
            <person name="Brigido M.M."/>
            <person name="Brito C.A."/>
            <person name="Brocchi M."/>
            <person name="Burity H.A."/>
            <person name="Camargo A.A."/>
            <person name="Cardoso D.D.P."/>
            <person name="Carneiro N.P."/>
            <person name="Carraro D.M."/>
            <person name="Carvalho C.M.B."/>
            <person name="Cascardo J.C.M."/>
            <person name="Cavada B.S."/>
            <person name="Chueire L.M.O."/>
            <person name="Creczynski-Pasa T.B."/>
            <person name="Cunha-Junior N.C."/>
            <person name="Fagundes N."/>
            <person name="Falcao C.L."/>
            <person name="Fantinatti F."/>
            <person name="Farias I.P."/>
            <person name="Felipe M.S.S."/>
            <person name="Ferrari L.P."/>
            <person name="Ferro J.A."/>
            <person name="Ferro M.I.T."/>
            <person name="Franco G.R."/>
            <person name="Freitas N.S.A."/>
            <person name="Furlan L.R."/>
            <person name="Gazzinelli R.T."/>
            <person name="Gomes E.A."/>
            <person name="Goncalves P.R."/>
            <person name="Grangeiro T.B."/>
            <person name="Grattapaglia D."/>
            <person name="Grisard E.C."/>
            <person name="Hanna E.S."/>
            <person name="Jardim S.N."/>
            <person name="Laurino J."/>
            <person name="Leoi L.C.T."/>
            <person name="Lima L.F.A."/>
            <person name="Loureiro M.F."/>
            <person name="Lyra M.C.C.P."/>
            <person name="Madeira H.M.F."/>
            <person name="Manfio G.P."/>
            <person name="Maranhao A.Q."/>
            <person name="Martins W.S."/>
            <person name="di Mauro S.M.Z."/>
            <person name="de Medeiros S.R.B."/>
            <person name="Meissner R.V."/>
            <person name="Moreira M.A.M."/>
            <person name="Nascimento F.F."/>
            <person name="Nicolas M.F."/>
            <person name="Oliveira J.G."/>
            <person name="Oliveira S.C."/>
            <person name="Paixao R.F.C."/>
            <person name="Parente J.A."/>
            <person name="Pedrosa F.O."/>
            <person name="Pena S.D.J."/>
            <person name="Pereira J.O."/>
            <person name="Pereira M."/>
            <person name="Pinto L.S.R.C."/>
            <person name="Pinto L.S."/>
            <person name="Porto J.I.R."/>
            <person name="Potrich D.P."/>
            <person name="Ramalho-Neto C.E."/>
            <person name="Reis A.M.M."/>
            <person name="Rigo L.U."/>
            <person name="Rondinelli E."/>
            <person name="Santos E.B.P."/>
            <person name="Santos F.R."/>
            <person name="Schneider M.P.C."/>
            <person name="Seuanez H.N."/>
            <person name="Silva A.M.R."/>
            <person name="da Silva A.L.C."/>
            <person name="Silva D.W."/>
            <person name="Silva R."/>
            <person name="Simoes I.C."/>
            <person name="Simon D."/>
            <person name="Soares C.M.A."/>
            <person name="Soares R.B.A."/>
            <person name="Souza E.M."/>
            <person name="Souza K.R.L."/>
            <person name="Souza R.C."/>
            <person name="Steffens M.B.R."/>
            <person name="Steindel M."/>
            <person name="Teixeira S.R."/>
            <person name="Urmenyi T."/>
            <person name="Vettore A."/>
            <person name="Wassem R."/>
            <person name="Zaha A."/>
            <person name="Simpson A.J.G."/>
        </authorList>
    </citation>
    <scope>NUCLEOTIDE SEQUENCE [LARGE SCALE GENOMIC DNA]</scope>
    <source>
        <strain>ATCC 12472 / DSM 30191 / JCM 1249 / CCUG 213 / NBRC 12614 / NCIMB 9131 / NCTC 9757 / MK</strain>
    </source>
</reference>
<keyword id="KW-0975">Bacterial flagellum</keyword>
<keyword id="KW-0574">Periplasm</keyword>
<keyword id="KW-1185">Reference proteome</keyword>
<keyword id="KW-0732">Signal</keyword>
<dbReference type="EMBL" id="AE016825">
    <property type="protein sequence ID" value="AAQ59383.1"/>
    <property type="molecule type" value="Genomic_DNA"/>
</dbReference>
<dbReference type="RefSeq" id="WP_011135260.1">
    <property type="nucleotide sequence ID" value="NC_005085.1"/>
</dbReference>
<dbReference type="SMR" id="Q7NXB9"/>
<dbReference type="STRING" id="243365.CV_1708"/>
<dbReference type="GeneID" id="66367392"/>
<dbReference type="KEGG" id="cvi:CV_1708"/>
<dbReference type="eggNOG" id="COG1706">
    <property type="taxonomic scope" value="Bacteria"/>
</dbReference>
<dbReference type="HOGENOM" id="CLU_045235_1_0_4"/>
<dbReference type="OrthoDB" id="9786431at2"/>
<dbReference type="Proteomes" id="UP000001424">
    <property type="component" value="Chromosome"/>
</dbReference>
<dbReference type="GO" id="GO:0009428">
    <property type="term" value="C:bacterial-type flagellum basal body, distal rod, P ring"/>
    <property type="evidence" value="ECO:0007669"/>
    <property type="project" value="InterPro"/>
</dbReference>
<dbReference type="GO" id="GO:0030288">
    <property type="term" value="C:outer membrane-bounded periplasmic space"/>
    <property type="evidence" value="ECO:0007669"/>
    <property type="project" value="InterPro"/>
</dbReference>
<dbReference type="GO" id="GO:0005198">
    <property type="term" value="F:structural molecule activity"/>
    <property type="evidence" value="ECO:0007669"/>
    <property type="project" value="InterPro"/>
</dbReference>
<dbReference type="GO" id="GO:0071973">
    <property type="term" value="P:bacterial-type flagellum-dependent cell motility"/>
    <property type="evidence" value="ECO:0007669"/>
    <property type="project" value="InterPro"/>
</dbReference>
<dbReference type="HAMAP" id="MF_00416">
    <property type="entry name" value="FlgI"/>
    <property type="match status" value="1"/>
</dbReference>
<dbReference type="InterPro" id="IPR001782">
    <property type="entry name" value="Flag_FlgI"/>
</dbReference>
<dbReference type="NCBIfam" id="NF003676">
    <property type="entry name" value="PRK05303.1"/>
    <property type="match status" value="1"/>
</dbReference>
<dbReference type="PANTHER" id="PTHR30381">
    <property type="entry name" value="FLAGELLAR P-RING PERIPLASMIC PROTEIN FLGI"/>
    <property type="match status" value="1"/>
</dbReference>
<dbReference type="PANTHER" id="PTHR30381:SF0">
    <property type="entry name" value="FLAGELLAR P-RING PROTEIN"/>
    <property type="match status" value="1"/>
</dbReference>
<dbReference type="Pfam" id="PF02119">
    <property type="entry name" value="FlgI"/>
    <property type="match status" value="1"/>
</dbReference>
<dbReference type="PRINTS" id="PR01010">
    <property type="entry name" value="FLGPRINGFLGI"/>
</dbReference>
<protein>
    <recommendedName>
        <fullName evidence="1">Flagellar P-ring protein 1</fullName>
    </recommendedName>
    <alternativeName>
        <fullName evidence="1">Basal body P-ring protein 1</fullName>
    </alternativeName>
</protein>